<reference key="1">
    <citation type="journal article" date="1987" name="Mol. Microbiol.">
        <title>Isolation and sequence of the spo0E gene: its role in initiation of sporulation in Bacillus subtilis.</title>
        <authorList>
            <person name="Perego M."/>
            <person name="Hoch J.A."/>
        </authorList>
    </citation>
    <scope>NUCLEOTIDE SEQUENCE [GENOMIC DNA]</scope>
    <source>
        <strain>168</strain>
    </source>
</reference>
<reference key="2">
    <citation type="journal article" date="1997" name="Nature">
        <title>The complete genome sequence of the Gram-positive bacterium Bacillus subtilis.</title>
        <authorList>
            <person name="Kunst F."/>
            <person name="Ogasawara N."/>
            <person name="Moszer I."/>
            <person name="Albertini A.M."/>
            <person name="Alloni G."/>
            <person name="Azevedo V."/>
            <person name="Bertero M.G."/>
            <person name="Bessieres P."/>
            <person name="Bolotin A."/>
            <person name="Borchert S."/>
            <person name="Borriss R."/>
            <person name="Boursier L."/>
            <person name="Brans A."/>
            <person name="Braun M."/>
            <person name="Brignell S.C."/>
            <person name="Bron S."/>
            <person name="Brouillet S."/>
            <person name="Bruschi C.V."/>
            <person name="Caldwell B."/>
            <person name="Capuano V."/>
            <person name="Carter N.M."/>
            <person name="Choi S.-K."/>
            <person name="Codani J.-J."/>
            <person name="Connerton I.F."/>
            <person name="Cummings N.J."/>
            <person name="Daniel R.A."/>
            <person name="Denizot F."/>
            <person name="Devine K.M."/>
            <person name="Duesterhoeft A."/>
            <person name="Ehrlich S.D."/>
            <person name="Emmerson P.T."/>
            <person name="Entian K.-D."/>
            <person name="Errington J."/>
            <person name="Fabret C."/>
            <person name="Ferrari E."/>
            <person name="Foulger D."/>
            <person name="Fritz C."/>
            <person name="Fujita M."/>
            <person name="Fujita Y."/>
            <person name="Fuma S."/>
            <person name="Galizzi A."/>
            <person name="Galleron N."/>
            <person name="Ghim S.-Y."/>
            <person name="Glaser P."/>
            <person name="Goffeau A."/>
            <person name="Golightly E.J."/>
            <person name="Grandi G."/>
            <person name="Guiseppi G."/>
            <person name="Guy B.J."/>
            <person name="Haga K."/>
            <person name="Haiech J."/>
            <person name="Harwood C.R."/>
            <person name="Henaut A."/>
            <person name="Hilbert H."/>
            <person name="Holsappel S."/>
            <person name="Hosono S."/>
            <person name="Hullo M.-F."/>
            <person name="Itaya M."/>
            <person name="Jones L.-M."/>
            <person name="Joris B."/>
            <person name="Karamata D."/>
            <person name="Kasahara Y."/>
            <person name="Klaerr-Blanchard M."/>
            <person name="Klein C."/>
            <person name="Kobayashi Y."/>
            <person name="Koetter P."/>
            <person name="Koningstein G."/>
            <person name="Krogh S."/>
            <person name="Kumano M."/>
            <person name="Kurita K."/>
            <person name="Lapidus A."/>
            <person name="Lardinois S."/>
            <person name="Lauber J."/>
            <person name="Lazarevic V."/>
            <person name="Lee S.-M."/>
            <person name="Levine A."/>
            <person name="Liu H."/>
            <person name="Masuda S."/>
            <person name="Mauel C."/>
            <person name="Medigue C."/>
            <person name="Medina N."/>
            <person name="Mellado R.P."/>
            <person name="Mizuno M."/>
            <person name="Moestl D."/>
            <person name="Nakai S."/>
            <person name="Noback M."/>
            <person name="Noone D."/>
            <person name="O'Reilly M."/>
            <person name="Ogawa K."/>
            <person name="Ogiwara A."/>
            <person name="Oudega B."/>
            <person name="Park S.-H."/>
            <person name="Parro V."/>
            <person name="Pohl T.M."/>
            <person name="Portetelle D."/>
            <person name="Porwollik S."/>
            <person name="Prescott A.M."/>
            <person name="Presecan E."/>
            <person name="Pujic P."/>
            <person name="Purnelle B."/>
            <person name="Rapoport G."/>
            <person name="Rey M."/>
            <person name="Reynolds S."/>
            <person name="Rieger M."/>
            <person name="Rivolta C."/>
            <person name="Rocha E."/>
            <person name="Roche B."/>
            <person name="Rose M."/>
            <person name="Sadaie Y."/>
            <person name="Sato T."/>
            <person name="Scanlan E."/>
            <person name="Schleich S."/>
            <person name="Schroeter R."/>
            <person name="Scoffone F."/>
            <person name="Sekiguchi J."/>
            <person name="Sekowska A."/>
            <person name="Seror S.J."/>
            <person name="Serror P."/>
            <person name="Shin B.-S."/>
            <person name="Soldo B."/>
            <person name="Sorokin A."/>
            <person name="Tacconi E."/>
            <person name="Takagi T."/>
            <person name="Takahashi H."/>
            <person name="Takemaru K."/>
            <person name="Takeuchi M."/>
            <person name="Tamakoshi A."/>
            <person name="Tanaka T."/>
            <person name="Terpstra P."/>
            <person name="Tognoni A."/>
            <person name="Tosato V."/>
            <person name="Uchiyama S."/>
            <person name="Vandenbol M."/>
            <person name="Vannier F."/>
            <person name="Vassarotti A."/>
            <person name="Viari A."/>
            <person name="Wambutt R."/>
            <person name="Wedler E."/>
            <person name="Wedler H."/>
            <person name="Weitzenegger T."/>
            <person name="Winters P."/>
            <person name="Wipat A."/>
            <person name="Yamamoto H."/>
            <person name="Yamane K."/>
            <person name="Yasumoto K."/>
            <person name="Yata K."/>
            <person name="Yoshida K."/>
            <person name="Yoshikawa H.-F."/>
            <person name="Zumstein E."/>
            <person name="Yoshikawa H."/>
            <person name="Danchin A."/>
        </authorList>
    </citation>
    <scope>NUCLEOTIDE SEQUENCE [LARGE SCALE GENOMIC DNA]</scope>
    <source>
        <strain>168</strain>
    </source>
</reference>
<reference key="3">
    <citation type="journal article" date="1994" name="Proc. Natl. Acad. Sci. U.S.A.">
        <title>Deactivation of the sporulation transcription factor Spo0A by the Spo0E protein phosphatase.</title>
        <authorList>
            <person name="Ohlsen K.L."/>
            <person name="Grimsley J.K."/>
            <person name="Hoch J.A."/>
        </authorList>
    </citation>
    <scope>PROTEIN SEQUENCE OF 1-7</scope>
    <scope>FUNCTION</scope>
    <scope>MUTAGENESIS OF THE C-TERMINUS</scope>
</reference>
<reference key="4">
    <citation type="journal article" date="2000" name="Biochem. Biophys. Res. Commun.">
        <title>Deficiency of the initiation events of sporulation in Bacillus subtilis clpP mutant can be suppressed by a lack of the Spo0E protein phosphatase.</title>
        <authorList>
            <person name="Nanamiya H."/>
            <person name="Takahashi K."/>
            <person name="Fujita M."/>
            <person name="Kawamura F."/>
        </authorList>
    </citation>
    <scope>FUNCTION</scope>
</reference>
<reference key="5">
    <citation type="journal article" date="2002" name="Mol. Microbiol.">
        <title>Interaction surface of the Spo0A response regulator with the Spo0E phosphatase.</title>
        <authorList>
            <person name="Stephenson S.J."/>
            <person name="Perego M."/>
        </authorList>
    </citation>
    <scope>FUNCTION</scope>
    <scope>INTERACTION WITH SPO0A</scope>
</reference>
<reference key="6">
    <citation type="journal article" date="2004" name="Curr. Microbiol.">
        <title>AbrB and Spo0E control the proper timing of sporulation in Bacillus subtilis.</title>
        <authorList>
            <person name="Shafikhani S.H."/>
            <person name="Leighton T."/>
        </authorList>
    </citation>
    <scope>FUNCTION</scope>
</reference>
<reference key="7">
    <citation type="journal article" date="2008" name="J. Biol. Chem.">
        <title>Functional role for a conserved aspartate in the Spo0E signature motif involved in the dephosphorylation of the Bacillus subtilis sporulation regulator Spo0A.</title>
        <authorList>
            <person name="Diaz A.R."/>
            <person name="Stephenson S."/>
            <person name="Green J.M."/>
            <person name="Levdikov V.M."/>
            <person name="Wilkinson A.J."/>
            <person name="Perego M."/>
        </authorList>
    </citation>
    <scope>FUNCTION</scope>
    <scope>INTERACTION WITH SPO0A</scope>
    <scope>MUTAGENESIS OF ILE-36; SER-39; GLN-40; LEU-42; ASP-43; LEU-45 AND ILE-46</scope>
</reference>
<reference key="8">
    <citation type="journal article" date="2009" name="Microbiology">
        <title>The Spo0E phosphatase of Bacillus subtilis is a substrate of the FtsH metalloprotease.</title>
        <authorList>
            <person name="Le A.T."/>
            <person name="Schumann W."/>
        </authorList>
    </citation>
    <scope>DEGRADATION BY FTSH</scope>
    <source>
        <strain>1012</strain>
    </source>
</reference>
<comment type="function">
    <text evidence="1 2 3 4 5">Aspartyl-phosphate phosphatase which specifically dephosphorylates the sporulation transcription factor Spo0A-P and negatively regulates the sporulation initiation pathway in order to control the proper timing of sporulation.</text>
</comment>
<comment type="subunit">
    <text evidence="2 4">Interacts with Spo0A.</text>
</comment>
<comment type="PTM">
    <text>Probably degraded by FtsH, the last 14 residues seem to form the FtsH recognition site.</text>
</comment>
<comment type="miscellaneous">
    <text>Mutations that block the onset of sporulation in Bacillus subtilis are called stage 0 mutations, or spo0 mutations, and at least eight genetic loci have been identified in which a mutation can result in a stage 0 phenotype. Stage 0 mutants lack the ability to form the asymmetric septum characteristic of the initiation of the sporulation process. In addition, these mutations have many pleiotropic effects on the synthesis of a variety of transcripts by minor forms of RNA polymerase in this organism.</text>
</comment>
<comment type="similarity">
    <text evidence="6">Belongs to the spo0E family.</text>
</comment>
<protein>
    <recommendedName>
        <fullName>Aspartyl-phosphate phosphatase Spo0E</fullName>
        <ecNumber>3.1.3.-</ecNumber>
    </recommendedName>
    <alternativeName>
        <fullName>Stage 0 sporulation protein E</fullName>
    </alternativeName>
    <alternativeName>
        <fullName>Stage 0 sporulation regulatory protein Spo0E</fullName>
    </alternativeName>
</protein>
<accession>P05043</accession>
<keyword id="KW-0903">Direct protein sequencing</keyword>
<keyword id="KW-0378">Hydrolase</keyword>
<keyword id="KW-1185">Reference proteome</keyword>
<keyword id="KW-0749">Sporulation</keyword>
<keyword id="KW-0804">Transcription</keyword>
<keyword id="KW-0805">Transcription regulation</keyword>
<gene>
    <name type="primary">spo0E</name>
    <name type="ordered locus">BSU13640</name>
</gene>
<organism>
    <name type="scientific">Bacillus subtilis (strain 168)</name>
    <dbReference type="NCBI Taxonomy" id="224308"/>
    <lineage>
        <taxon>Bacteria</taxon>
        <taxon>Bacillati</taxon>
        <taxon>Bacillota</taxon>
        <taxon>Bacilli</taxon>
        <taxon>Bacillales</taxon>
        <taxon>Bacillaceae</taxon>
        <taxon>Bacillus</taxon>
    </lineage>
</organism>
<proteinExistence type="evidence at protein level"/>
<dbReference type="EC" id="3.1.3.-"/>
<dbReference type="EMBL" id="Y00526">
    <property type="protein sequence ID" value="CAA68583.1"/>
    <property type="molecule type" value="Genomic_DNA"/>
</dbReference>
<dbReference type="EMBL" id="AL009126">
    <property type="protein sequence ID" value="CAB13237.1"/>
    <property type="molecule type" value="Genomic_DNA"/>
</dbReference>
<dbReference type="PIR" id="S03746">
    <property type="entry name" value="S03746"/>
</dbReference>
<dbReference type="RefSeq" id="NP_389247.1">
    <property type="nucleotide sequence ID" value="NC_000964.3"/>
</dbReference>
<dbReference type="RefSeq" id="WP_003218598.1">
    <property type="nucleotide sequence ID" value="NZ_OZ025638.1"/>
</dbReference>
<dbReference type="SMR" id="P05043"/>
<dbReference type="FunCoup" id="P05043">
    <property type="interactions" value="21"/>
</dbReference>
<dbReference type="STRING" id="224308.BSU13640"/>
<dbReference type="PaxDb" id="224308-BSU13640"/>
<dbReference type="EnsemblBacteria" id="CAB13237">
    <property type="protein sequence ID" value="CAB13237"/>
    <property type="gene ID" value="BSU_13640"/>
</dbReference>
<dbReference type="GeneID" id="86874141"/>
<dbReference type="GeneID" id="939315"/>
<dbReference type="KEGG" id="bsu:BSU13640"/>
<dbReference type="PATRIC" id="fig|224308.179.peg.1481"/>
<dbReference type="InParanoid" id="P05043"/>
<dbReference type="OrthoDB" id="2973859at2"/>
<dbReference type="BioCyc" id="BSUB:BSU13640-MONOMER"/>
<dbReference type="PRO" id="PR:P05043"/>
<dbReference type="Proteomes" id="UP000001570">
    <property type="component" value="Chromosome"/>
</dbReference>
<dbReference type="GO" id="GO:0016787">
    <property type="term" value="F:hydrolase activity"/>
    <property type="evidence" value="ECO:0007669"/>
    <property type="project" value="UniProtKB-KW"/>
</dbReference>
<dbReference type="GO" id="GO:0046983">
    <property type="term" value="F:protein dimerization activity"/>
    <property type="evidence" value="ECO:0007669"/>
    <property type="project" value="InterPro"/>
</dbReference>
<dbReference type="GO" id="GO:0043937">
    <property type="term" value="P:regulation of sporulation"/>
    <property type="evidence" value="ECO:0000316"/>
    <property type="project" value="CACAO"/>
</dbReference>
<dbReference type="GO" id="GO:0030435">
    <property type="term" value="P:sporulation resulting in formation of a cellular spore"/>
    <property type="evidence" value="ECO:0007669"/>
    <property type="project" value="UniProtKB-KW"/>
</dbReference>
<dbReference type="Gene3D" id="4.10.280.10">
    <property type="entry name" value="Helix-loop-helix DNA-binding domain"/>
    <property type="match status" value="1"/>
</dbReference>
<dbReference type="InterPro" id="IPR036638">
    <property type="entry name" value="HLH_DNA-bd_sf"/>
</dbReference>
<dbReference type="InterPro" id="IPR018540">
    <property type="entry name" value="Spo0E-like"/>
</dbReference>
<dbReference type="InterPro" id="IPR037208">
    <property type="entry name" value="Spo0E-like_sf"/>
</dbReference>
<dbReference type="Pfam" id="PF09388">
    <property type="entry name" value="SpoOE-like"/>
    <property type="match status" value="1"/>
</dbReference>
<dbReference type="SUPFAM" id="SSF140500">
    <property type="entry name" value="BAS1536-like"/>
    <property type="match status" value="1"/>
</dbReference>
<evidence type="ECO:0000269" key="1">
    <source>
    </source>
</evidence>
<evidence type="ECO:0000269" key="2">
    <source>
    </source>
</evidence>
<evidence type="ECO:0000269" key="3">
    <source>
    </source>
</evidence>
<evidence type="ECO:0000269" key="4">
    <source>
    </source>
</evidence>
<evidence type="ECO:0000269" key="5">
    <source>
    </source>
</evidence>
<evidence type="ECO:0000305" key="6"/>
<feature type="chain" id="PRO_0000072053" description="Aspartyl-phosphate phosphatase Spo0E">
    <location>
        <begin position="1"/>
        <end position="85"/>
    </location>
</feature>
<feature type="mutagenesis site" description="Impairs sporulation inhibition activity." evidence="4">
    <original>I</original>
    <variation>A</variation>
    <location>
        <position position="36"/>
    </location>
</feature>
<feature type="mutagenesis site" description="Impairs sporulation inhibition activity." evidence="4">
    <original>S</original>
    <variation>A</variation>
    <location>
        <position position="39"/>
    </location>
</feature>
<feature type="mutagenesis site" description="Impairs sporulation inhibition activity." evidence="4">
    <original>Q</original>
    <variation>A</variation>
    <location>
        <position position="40"/>
    </location>
</feature>
<feature type="mutagenesis site" description="Impairs sporulation inhibition activity." evidence="4">
    <original>L</original>
    <variation>A</variation>
    <location>
        <position position="42"/>
    </location>
</feature>
<feature type="mutagenesis site" description="Impairs sporulation inhibition activity." evidence="4">
    <original>D</original>
    <variation>A</variation>
    <location>
        <position position="43"/>
    </location>
</feature>
<feature type="mutagenesis site" description="Impairs sporulation inhibition activity." evidence="4">
    <original>L</original>
    <variation>A</variation>
    <location>
        <position position="45"/>
    </location>
</feature>
<feature type="mutagenesis site" description="Impairs sporulation inhibition activity." evidence="4">
    <original>I</original>
    <variation>A</variation>
    <location>
        <position position="46"/>
    </location>
</feature>
<feature type="mutagenesis site" description="In spo0E11; a hyperactive phosphatase, it is no longer a substrate for FtsH." evidence="5">
    <location>
        <begin position="71"/>
        <end position="85"/>
    </location>
</feature>
<sequence>MGGSSEQERLLVSIDEKRKLMIDAARKQGFTGHDTIRHSQELDCLINEYHQLMQENEHSQGIQGLVKKLGLWPRRDVMPAYDANK</sequence>
<name>SP0E_BACSU</name>